<reference key="1">
    <citation type="journal article" date="2007" name="J. Bacteriol.">
        <title>Comparative genome analysis of four magnetotactic bacteria reveals a complex set of group-specific genes implicated in magnetosome biomineralization and function.</title>
        <authorList>
            <person name="Richter M."/>
            <person name="Kube M."/>
            <person name="Bazylinski D.A."/>
            <person name="Lombardot T."/>
            <person name="Gloeckner F.O."/>
            <person name="Reinhardt R."/>
            <person name="Schueler D."/>
        </authorList>
    </citation>
    <scope>NUCLEOTIDE SEQUENCE [LARGE SCALE GENOMIC DNA]</scope>
    <source>
        <strain>DSM 6361 / JCM 21280 / NBRC 15271 / MSR-1</strain>
    </source>
</reference>
<reference key="2">
    <citation type="journal article" date="2014" name="Genome Announc.">
        <title>Complete genome sequence of Magnetospirillum gryphiswaldense MSR-1.</title>
        <authorList>
            <person name="Wang X."/>
            <person name="Wang Q."/>
            <person name="Zhang W."/>
            <person name="Wang Y."/>
            <person name="Li L."/>
            <person name="Wen T."/>
            <person name="Zhang T."/>
            <person name="Zhang Y."/>
            <person name="Xu J."/>
            <person name="Hu J."/>
            <person name="Li S."/>
            <person name="Liu L."/>
            <person name="Liu J."/>
            <person name="Jiang W."/>
            <person name="Tian J."/>
            <person name="Li Y."/>
            <person name="Schuler D."/>
            <person name="Wang L."/>
            <person name="Li J."/>
        </authorList>
    </citation>
    <scope>NUCLEOTIDE SEQUENCE [LARGE SCALE GENOMIC DNA]</scope>
    <source>
        <strain>DSM 6361 / JCM 21280 / NBRC 15271 / MSR-1</strain>
    </source>
</reference>
<reference key="3">
    <citation type="journal article" date="2010" name="J. Bacteriol.">
        <title>Deletion of the ftsZ-like gene results in the production of superparamagnetic magnetite magnetosomes in Magnetospirillum gryphiswaldense.</title>
        <authorList>
            <person name="Ding Y."/>
            <person name="Li J."/>
            <person name="Liu J."/>
            <person name="Yang J."/>
            <person name="Jiang W."/>
            <person name="Tian J."/>
            <person name="Li Y."/>
            <person name="Pan Y."/>
            <person name="Li J."/>
        </authorList>
    </citation>
    <scope>INDUCTION</scope>
    <source>
        <strain>DSM 6361 / JCM 21280 / NBRC 15271 / MSR-1</strain>
    </source>
</reference>
<reference key="4">
    <citation type="journal article" date="2011" name="PLoS ONE">
        <title>Functional analysis of the magnetosome island in Magnetospirillum gryphiswaldense: the mamAB operon is sufficient for magnetite biomineralization.</title>
        <authorList>
            <person name="Lohsse A."/>
            <person name="Ullrich S."/>
            <person name="Katzmann E."/>
            <person name="Borg S."/>
            <person name="Wanner G."/>
            <person name="Richter M."/>
            <person name="Voigt B."/>
            <person name="Schweder T."/>
            <person name="Schueler D."/>
        </authorList>
    </citation>
    <scope>PROBABLE OPERON</scope>
    <scope>DISRUPTION PHENOTYPE</scope>
    <source>
        <strain>DSM 6361 / JCM 21280 / NBRC 15271 / MSR-1</strain>
    </source>
</reference>
<reference key="5">
    <citation type="journal article" date="2013" name="Mol. Microbiol.">
        <title>The magnetosome proteins MamX, MamZ and MamH are involved in redox control of magnetite biomineralization in Magnetospirillum gryphiswaldense.</title>
        <authorList>
            <person name="Raschdorf O."/>
            <person name="Mueller F.D."/>
            <person name="Posfai M."/>
            <person name="Plitzko J.M."/>
            <person name="Schueler D."/>
        </authorList>
    </citation>
    <scope>FUNCTION</scope>
    <scope>POSSIBLE COFACTOR</scope>
    <scope>PROBABLE OPERON</scope>
    <scope>DOMAIN</scope>
    <scope>DISRUPTION PHENOTYPE</scope>
    <scope>MUTAGENESIS OF 65-CYS--CYS-68 AND 104-CYS--CYS-107</scope>
    <source>
        <strain>DSM 6361 / JCM 21280 / NBRC 15271 / MSR-1</strain>
    </source>
</reference>
<reference key="6">
    <citation type="journal article" date="2013" name="BMC Microbiol.">
        <title>MamX encoded by the mamXY operon is involved in control of magnetosome maturation in Magnetospirillum gryphiswaldense MSR-1.</title>
        <authorList>
            <person name="Yang J."/>
            <person name="Li S."/>
            <person name="Huang X."/>
            <person name="Li J."/>
            <person name="Li L."/>
            <person name="Pan Y."/>
            <person name="Li Y."/>
        </authorList>
    </citation>
    <scope>FUNCTION</scope>
    <scope>INDUCTION</scope>
    <scope>DISRUPTION PHENOTYPE</scope>
    <source>
        <strain>DSM 6361 / JCM 21280 / NBRC 15271 / MSR-1</strain>
    </source>
</reference>
<reference key="7">
    <citation type="journal article" date="2019" name="Appl. Environ. Microbiol.">
        <title>Work Patterns of MamXY Proteins during Magnetosome Formation in Magnetospirillum gryphiswaldense MSR-1.</title>
        <authorList>
            <person name="Wang Q."/>
            <person name="Wu S."/>
            <person name="Li X."/>
            <person name="Zhang T."/>
            <person name="Yang J."/>
            <person name="Wang X."/>
            <person name="Li F."/>
            <person name="Li Y."/>
            <person name="Peng Y."/>
            <person name="Li J."/>
        </authorList>
    </citation>
    <scope>POSSIBLE FUNCTION</scope>
    <scope>PROBABLE INTERACTION WITH FTSZ-LIKE AND MAMY</scope>
    <scope>SUBCELLULAR LOCATION</scope>
    <scope>INDUCTION</scope>
    <source>
        <strain>DSM 6361 / JCM 21280 / NBRC 15271 / MSR-1</strain>
    </source>
</reference>
<name>MAMX_MAGGM</name>
<protein>
    <recommendedName>
        <fullName evidence="10">Magnetosome protein MamX</fullName>
    </recommendedName>
    <alternativeName>
        <fullName evidence="9">Magnetochrome MamX</fullName>
    </alternativeName>
</protein>
<accession>V6F2C2</accession>
<accession>A4U5C4</accession>
<proteinExistence type="evidence at protein level"/>
<dbReference type="EMBL" id="CU459003">
    <property type="protein sequence ID" value="CAM78081.1"/>
    <property type="molecule type" value="Genomic_DNA"/>
</dbReference>
<dbReference type="EMBL" id="HG794546">
    <property type="protein sequence ID" value="CDK99537.1"/>
    <property type="molecule type" value="Genomic_DNA"/>
</dbReference>
<dbReference type="RefSeq" id="WP_024080540.1">
    <property type="nucleotide sequence ID" value="NZ_CP027526.1"/>
</dbReference>
<dbReference type="SMR" id="V6F2C2"/>
<dbReference type="STRING" id="1430440.MGMSRv2__2322"/>
<dbReference type="KEGG" id="mgy:MGMSRv2__2322"/>
<dbReference type="eggNOG" id="COG0265">
    <property type="taxonomic scope" value="Bacteria"/>
</dbReference>
<dbReference type="HOGENOM" id="CLU_942689_0_0_5"/>
<dbReference type="Proteomes" id="UP000018922">
    <property type="component" value="Chromosome I"/>
</dbReference>
<dbReference type="GO" id="GO:0110146">
    <property type="term" value="C:magnetosome membrane"/>
    <property type="evidence" value="ECO:0000315"/>
    <property type="project" value="UniProtKB"/>
</dbReference>
<dbReference type="GO" id="GO:0046872">
    <property type="term" value="F:metal ion binding"/>
    <property type="evidence" value="ECO:0007669"/>
    <property type="project" value="UniProtKB-KW"/>
</dbReference>
<dbReference type="InterPro" id="IPR040963">
    <property type="entry name" value="MCR"/>
</dbReference>
<dbReference type="InterPro" id="IPR036280">
    <property type="entry name" value="Multihaem_cyt_sf"/>
</dbReference>
<dbReference type="NCBIfam" id="NF040996">
    <property type="entry name" value="MamX"/>
    <property type="match status" value="1"/>
</dbReference>
<dbReference type="Pfam" id="PF18509">
    <property type="entry name" value="MCR"/>
    <property type="match status" value="2"/>
</dbReference>
<dbReference type="SUPFAM" id="SSF48695">
    <property type="entry name" value="Multiheme cytochromes"/>
    <property type="match status" value="1"/>
</dbReference>
<dbReference type="PROSITE" id="PS51008">
    <property type="entry name" value="MULTIHEME_CYTC"/>
    <property type="match status" value="1"/>
</dbReference>
<sequence length="269" mass="28221">MNTKAVAHPDIAVWIMALGIAFSMALVLTALFNANPWEDHTYDLAPPIVAGMAAPHRDGREKMVCSSCHIVTPASAATGPGAGTLPIVEGTPAPHVDGREKMACASCHTIVKKGSVAKSGKASPAPVAFSQGMPLPEAMSVALAVTPAPAPLGNEAHERMVPFRYQGKIVSVAGAGTRSVWGDIYIQINDGINPPMWIDLAPLWFLQAEGCLVRPGMFVKGTAFRDPTQASAGLDYAMSVMANGEVCALRDDHLNGLWANVGGVDAEER</sequence>
<gene>
    <name evidence="8" type="primary">mamX</name>
    <name type="ordered locus">MGMSRv2__2322</name>
    <name type="ORF">MGR_4149</name>
</gene>
<keyword id="KW-0091">Biomineralization</keyword>
<keyword id="KW-0349">Heme</keyword>
<keyword id="KW-0408">Iron</keyword>
<keyword id="KW-1281">Magnetosome</keyword>
<keyword id="KW-0472">Membrane</keyword>
<keyword id="KW-0479">Metal-binding</keyword>
<keyword id="KW-1185">Reference proteome</keyword>
<keyword id="KW-0812">Transmembrane</keyword>
<keyword id="KW-1133">Transmembrane helix</keyword>
<evidence type="ECO:0000255" key="1"/>
<evidence type="ECO:0000255" key="2">
    <source>
        <dbReference type="PROSITE-ProRule" id="PRU00433"/>
    </source>
</evidence>
<evidence type="ECO:0000269" key="3">
    <source>
    </source>
</evidence>
<evidence type="ECO:0000269" key="4">
    <source>
    </source>
</evidence>
<evidence type="ECO:0000269" key="5">
    <source>
    </source>
</evidence>
<evidence type="ECO:0000269" key="6">
    <source>
    </source>
</evidence>
<evidence type="ECO:0000269" key="7">
    <source>
    </source>
</evidence>
<evidence type="ECO:0000303" key="8">
    <source>
    </source>
</evidence>
<evidence type="ECO:0000303" key="9">
    <source>
    </source>
</evidence>
<evidence type="ECO:0000305" key="10"/>
<evidence type="ECO:0000305" key="11">
    <source>
    </source>
</evidence>
<evidence type="ECO:0000305" key="12">
    <source>
    </source>
</evidence>
<evidence type="ECO:0000305" key="13">
    <source>
    </source>
</evidence>
<evidence type="ECO:0000305" key="14">
    <source>
    </source>
</evidence>
<feature type="chain" id="PRO_0000447787" description="Magnetosome protein MamX">
    <location>
        <begin position="1"/>
        <end position="269"/>
    </location>
</feature>
<feature type="topological domain" description="Cytoplasmic" evidence="10">
    <location>
        <begin position="1"/>
        <end position="10"/>
    </location>
</feature>
<feature type="transmembrane region" description="Helical" evidence="1">
    <location>
        <begin position="11"/>
        <end position="31"/>
    </location>
</feature>
<feature type="topological domain" description="Lumenal" evidence="10">
    <location>
        <begin position="32"/>
        <end position="269"/>
    </location>
</feature>
<feature type="short sequence motif" description="MCR (magnetochrome) 1" evidence="12">
    <location>
        <begin position="48"/>
        <end position="71"/>
    </location>
</feature>
<feature type="short sequence motif" description="MCR 2" evidence="12">
    <location>
        <begin position="87"/>
        <end position="110"/>
    </location>
</feature>
<feature type="binding site" description="covalent" evidence="2 12">
    <location>
        <position position="65"/>
    </location>
    <ligand>
        <name>heme</name>
        <dbReference type="ChEBI" id="CHEBI:30413"/>
        <label>1</label>
    </ligand>
</feature>
<feature type="binding site" description="covalent" evidence="2 12">
    <location>
        <position position="68"/>
    </location>
    <ligand>
        <name>heme</name>
        <dbReference type="ChEBI" id="CHEBI:30413"/>
        <label>1</label>
    </ligand>
</feature>
<feature type="binding site" description="axial binding residue" evidence="2 12">
    <location>
        <position position="69"/>
    </location>
    <ligand>
        <name>heme</name>
        <dbReference type="ChEBI" id="CHEBI:30413"/>
        <label>1</label>
    </ligand>
    <ligandPart>
        <name>Fe</name>
        <dbReference type="ChEBI" id="CHEBI:18248"/>
    </ligandPart>
</feature>
<feature type="binding site" description="covalent" evidence="12">
    <location>
        <position position="104"/>
    </location>
    <ligand>
        <name>heme</name>
        <dbReference type="ChEBI" id="CHEBI:30413"/>
        <label>2</label>
    </ligand>
</feature>
<feature type="binding site" description="covalent" evidence="12">
    <location>
        <position position="107"/>
    </location>
    <ligand>
        <name>heme</name>
        <dbReference type="ChEBI" id="CHEBI:30413"/>
        <label>2</label>
    </ligand>
</feature>
<feature type="binding site" description="axial binding residue" evidence="12">
    <location>
        <position position="108"/>
    </location>
    <ligand>
        <name>heme</name>
        <dbReference type="ChEBI" id="CHEBI:30413"/>
        <label>2</label>
    </ligand>
    <ligandPart>
        <name>Fe</name>
        <dbReference type="ChEBI" id="CHEBI:18248"/>
    </ligandPart>
</feature>
<feature type="mutagenesis site" description="Phenocopies deletion mutant; reduced magnetic response, makes regular crystals sandwiched between flake-like crystals; when associated with A-104--107-A." evidence="5">
    <original>CSSC</original>
    <variation>ASSA</variation>
    <location>
        <begin position="65"/>
        <end position="68"/>
    </location>
</feature>
<feature type="mutagenesis site" description="Phenocopies deletion mutant; reduced magnetic response, makes regular crystals sandwiched between flake-like crystals; when associated with A-65--68-A." evidence="5">
    <original>CASC</original>
    <variation>AASA</variation>
    <location>
        <begin position="104"/>
        <end position="107"/>
    </location>
</feature>
<comment type="function">
    <text evidence="5 6 14">Required for correct biomineralization of the magnetosome, maybe via redox control (PubMed:23889511, PubMed:24020498). May function with MamY, MamZ amd Mms6 in biomineralization (Probable).</text>
</comment>
<comment type="cofactor">
    <cofactor>
        <name>heme</name>
        <dbReference type="ChEBI" id="CHEBI:30413"/>
    </cofactor>
    <text evidence="12">Binds 2 heme groups per subunit via the 2 magnetochrome (MCR) motifs.</text>
</comment>
<comment type="subunit">
    <text evidence="7">Probably interacts with FtsZ-like and MamY proteins.</text>
</comment>
<comment type="subcellular location">
    <subcellularLocation>
        <location evidence="14">Magnetosome membrane</location>
        <topology evidence="1">Single-pass membrane protein</topology>
    </subcellularLocation>
</comment>
<comment type="induction">
    <text evidence="3 6 7 11 12 13">Expressed in exponential phase, peaks about 18 hours (PubMed:20023033, PubMed:24020498). Protein is associated with magnetosomes as they start to develop, maximal protein is detected early then decreases (at protein level) (PubMed:30367002). Second gene in the 4 gene mamXY operon (Probable) (PubMed:20023033).</text>
</comment>
<comment type="domain">
    <text evidence="5">The C-terminus of the protein cannot be tagged, suggesting it is required for function.</text>
</comment>
<comment type="disruption phenotype">
    <text evidence="4 5 6">Slightly reduced magnetic response, produces chains of wild-type magnetite crystals sandwiched between irregularly shaped, small flake-like crystals. Small crystals are in magnetosomes, but some have multiple nucleation sites. Phenotype is exacerbated when grown in NH(4)(+) instead of NO(3)(-) medium. Deletion of the periplasmic nitrate reductase operon also exacerbates the phenotype. Deletion mutants probably make some hematite crystals as well as wild-type magnetite crystals (PubMed:23889511). Loss of magnetic response, considerable decrease in intracellular iron. Magnetosomes are normally organized but the crystals are irregular, smaller superparamagnetic magnetite particles. Increased expression of the downstream genes in the operon (mamZ and ftsZ-like) (PubMed:24020498). Deletion of 4 consecutive genes (mamY, mamX, mamZ, ftsZm) leads to cells with an intermediate magnetic response where magnetosomes have short chains of nearly regularly shaped, cubo-octahedral crystals flanked by small particles with poorly defined morphologies (PubMed:22043287).</text>
</comment>
<comment type="miscellaneous">
    <text evidence="10">This bacteria makes up to 60 cubo-octahedral magnetosomes of about 45 nm in diameter which contain membrane-bound crystals of magnetite (Fe(3)O(4)).</text>
</comment>
<comment type="similarity">
    <text evidence="10">Belongs to the magnetosome MamX family.</text>
</comment>
<organism>
    <name type="scientific">Magnetospirillum gryphiswaldense (strain DSM 6361 / JCM 21280 / NBRC 15271 / MSR-1)</name>
    <dbReference type="NCBI Taxonomy" id="431944"/>
    <lineage>
        <taxon>Bacteria</taxon>
        <taxon>Pseudomonadati</taxon>
        <taxon>Pseudomonadota</taxon>
        <taxon>Alphaproteobacteria</taxon>
        <taxon>Rhodospirillales</taxon>
        <taxon>Rhodospirillaceae</taxon>
        <taxon>Magnetospirillum</taxon>
    </lineage>
</organism>